<sequence length="146" mass="16183">VNLTAAEKTQVTNLWGKVNVKELGGEALSRLLVVYPWTRRFFEHFGDLSTAEAVLHNAKVLAHGEKVLTSFGEGLKHLDNLKGTFADLSELHCDKLHVDPENFRLLGNVLVIVLARHFGKEFTPDVQAAYEKVVAGVANALAHKYH</sequence>
<name>HBB_LOXAF</name>
<comment type="function">
    <text>Involved in oxygen transport from the lung to the various peripheral tissues.</text>
</comment>
<comment type="subunit">
    <text>Heterotetramer of two alpha chains and two beta chains.</text>
</comment>
<comment type="tissue specificity">
    <text>Red blood cells.</text>
</comment>
<comment type="similarity">
    <text evidence="3">Belongs to the globin family.</text>
</comment>
<accession>P02085</accession>
<dbReference type="PIR" id="A02401">
    <property type="entry name" value="HBELA"/>
</dbReference>
<dbReference type="SMR" id="P02085"/>
<dbReference type="HOGENOM" id="CLU_003827_10_0_1"/>
<dbReference type="InParanoid" id="P02085"/>
<dbReference type="OMA" id="HAIVSIW"/>
<dbReference type="Proteomes" id="UP000007646">
    <property type="component" value="Unassembled WGS sequence"/>
</dbReference>
<dbReference type="GO" id="GO:0072562">
    <property type="term" value="C:blood microparticle"/>
    <property type="evidence" value="ECO:0007669"/>
    <property type="project" value="TreeGrafter"/>
</dbReference>
<dbReference type="GO" id="GO:0031838">
    <property type="term" value="C:haptoglobin-hemoglobin complex"/>
    <property type="evidence" value="ECO:0007669"/>
    <property type="project" value="TreeGrafter"/>
</dbReference>
<dbReference type="GO" id="GO:0005833">
    <property type="term" value="C:hemoglobin complex"/>
    <property type="evidence" value="ECO:0007669"/>
    <property type="project" value="InterPro"/>
</dbReference>
<dbReference type="GO" id="GO:0031720">
    <property type="term" value="F:haptoglobin binding"/>
    <property type="evidence" value="ECO:0007669"/>
    <property type="project" value="TreeGrafter"/>
</dbReference>
<dbReference type="GO" id="GO:0020037">
    <property type="term" value="F:heme binding"/>
    <property type="evidence" value="ECO:0007669"/>
    <property type="project" value="InterPro"/>
</dbReference>
<dbReference type="GO" id="GO:0031721">
    <property type="term" value="F:hemoglobin alpha binding"/>
    <property type="evidence" value="ECO:0007669"/>
    <property type="project" value="TreeGrafter"/>
</dbReference>
<dbReference type="GO" id="GO:0046872">
    <property type="term" value="F:metal ion binding"/>
    <property type="evidence" value="ECO:0007669"/>
    <property type="project" value="UniProtKB-KW"/>
</dbReference>
<dbReference type="GO" id="GO:0043177">
    <property type="term" value="F:organic acid binding"/>
    <property type="evidence" value="ECO:0007669"/>
    <property type="project" value="TreeGrafter"/>
</dbReference>
<dbReference type="GO" id="GO:0019825">
    <property type="term" value="F:oxygen binding"/>
    <property type="evidence" value="ECO:0007669"/>
    <property type="project" value="InterPro"/>
</dbReference>
<dbReference type="GO" id="GO:0005344">
    <property type="term" value="F:oxygen carrier activity"/>
    <property type="evidence" value="ECO:0007669"/>
    <property type="project" value="UniProtKB-KW"/>
</dbReference>
<dbReference type="GO" id="GO:0004601">
    <property type="term" value="F:peroxidase activity"/>
    <property type="evidence" value="ECO:0007669"/>
    <property type="project" value="TreeGrafter"/>
</dbReference>
<dbReference type="GO" id="GO:0042744">
    <property type="term" value="P:hydrogen peroxide catabolic process"/>
    <property type="evidence" value="ECO:0007669"/>
    <property type="project" value="TreeGrafter"/>
</dbReference>
<dbReference type="CDD" id="cd08925">
    <property type="entry name" value="Hb-beta-like"/>
    <property type="match status" value="1"/>
</dbReference>
<dbReference type="FunFam" id="1.10.490.10:FF:000001">
    <property type="entry name" value="Hemoglobin subunit beta"/>
    <property type="match status" value="1"/>
</dbReference>
<dbReference type="Gene3D" id="1.10.490.10">
    <property type="entry name" value="Globins"/>
    <property type="match status" value="1"/>
</dbReference>
<dbReference type="InterPro" id="IPR000971">
    <property type="entry name" value="Globin"/>
</dbReference>
<dbReference type="InterPro" id="IPR009050">
    <property type="entry name" value="Globin-like_sf"/>
</dbReference>
<dbReference type="InterPro" id="IPR012292">
    <property type="entry name" value="Globin/Proto"/>
</dbReference>
<dbReference type="InterPro" id="IPR002337">
    <property type="entry name" value="Hemoglobin_b"/>
</dbReference>
<dbReference type="InterPro" id="IPR050056">
    <property type="entry name" value="Hemoglobin_oxygen_transport"/>
</dbReference>
<dbReference type="PANTHER" id="PTHR11442">
    <property type="entry name" value="HEMOGLOBIN FAMILY MEMBER"/>
    <property type="match status" value="1"/>
</dbReference>
<dbReference type="PANTHER" id="PTHR11442:SF42">
    <property type="entry name" value="HEMOGLOBIN SUBUNIT BETA"/>
    <property type="match status" value="1"/>
</dbReference>
<dbReference type="Pfam" id="PF00042">
    <property type="entry name" value="Globin"/>
    <property type="match status" value="1"/>
</dbReference>
<dbReference type="PRINTS" id="PR00814">
    <property type="entry name" value="BETAHAEM"/>
</dbReference>
<dbReference type="SUPFAM" id="SSF46458">
    <property type="entry name" value="Globin-like"/>
    <property type="match status" value="1"/>
</dbReference>
<dbReference type="PROSITE" id="PS01033">
    <property type="entry name" value="GLOBIN"/>
    <property type="match status" value="1"/>
</dbReference>
<reference key="1">
    <citation type="journal article" date="1984" name="Hoppe-Seyler's Z. Physiol. Chem.">
        <title>Phosphate-haemoglobin interaction. The primary structure of the haemoglobin of the African elephant (Loxodonta africana, Proboscidea): asparagine in position 2 of the beta-chain.</title>
        <authorList>
            <person name="Braunitzer G."/>
            <person name="Stangl A."/>
            <person name="Schrank B."/>
            <person name="Krombach C."/>
            <person name="Wiesner H."/>
        </authorList>
    </citation>
    <scope>PROTEIN SEQUENCE</scope>
</reference>
<organism>
    <name type="scientific">Loxodonta africana</name>
    <name type="common">African elephant</name>
    <dbReference type="NCBI Taxonomy" id="9785"/>
    <lineage>
        <taxon>Eukaryota</taxon>
        <taxon>Metazoa</taxon>
        <taxon>Chordata</taxon>
        <taxon>Craniata</taxon>
        <taxon>Vertebrata</taxon>
        <taxon>Euteleostomi</taxon>
        <taxon>Mammalia</taxon>
        <taxon>Eutheria</taxon>
        <taxon>Afrotheria</taxon>
        <taxon>Proboscidea</taxon>
        <taxon>Elephantidae</taxon>
        <taxon>Loxodonta</taxon>
    </lineage>
</organism>
<evidence type="ECO:0000250" key="1">
    <source>
        <dbReference type="UniProtKB" id="P02086"/>
    </source>
</evidence>
<evidence type="ECO:0000250" key="2">
    <source>
        <dbReference type="UniProtKB" id="P68871"/>
    </source>
</evidence>
<evidence type="ECO:0000255" key="3">
    <source>
        <dbReference type="PROSITE-ProRule" id="PRU00238"/>
    </source>
</evidence>
<gene>
    <name type="primary">HBB</name>
</gene>
<keyword id="KW-0007">Acetylation</keyword>
<keyword id="KW-0903">Direct protein sequencing</keyword>
<keyword id="KW-0349">Heme</keyword>
<keyword id="KW-0408">Iron</keyword>
<keyword id="KW-0479">Metal-binding</keyword>
<keyword id="KW-0561">Oxygen transport</keyword>
<keyword id="KW-0597">Phosphoprotein</keyword>
<keyword id="KW-1185">Reference proteome</keyword>
<keyword id="KW-0702">S-nitrosylation</keyword>
<keyword id="KW-0813">Transport</keyword>
<protein>
    <recommendedName>
        <fullName>Hemoglobin subunit beta</fullName>
    </recommendedName>
    <alternativeName>
        <fullName>Beta-globin</fullName>
    </alternativeName>
    <alternativeName>
        <fullName>Hemoglobin beta chain</fullName>
    </alternativeName>
</protein>
<feature type="chain" id="PRO_0000052995" description="Hemoglobin subunit beta">
    <location>
        <begin position="1"/>
        <end position="146"/>
    </location>
</feature>
<feature type="domain" description="Globin" evidence="3">
    <location>
        <begin position="2"/>
        <end position="146"/>
    </location>
</feature>
<feature type="binding site" description="distal binding residue">
    <location>
        <position position="63"/>
    </location>
    <ligand>
        <name>heme b</name>
        <dbReference type="ChEBI" id="CHEBI:60344"/>
    </ligand>
    <ligandPart>
        <name>Fe</name>
        <dbReference type="ChEBI" id="CHEBI:18248"/>
    </ligandPart>
</feature>
<feature type="binding site" description="proximal binding residue">
    <location>
        <position position="92"/>
    </location>
    <ligand>
        <name>heme b</name>
        <dbReference type="ChEBI" id="CHEBI:60344"/>
    </ligand>
    <ligandPart>
        <name>Fe</name>
        <dbReference type="ChEBI" id="CHEBI:18248"/>
    </ligandPart>
</feature>
<feature type="modified residue" description="N-acetylvaline" evidence="1">
    <location>
        <position position="1"/>
    </location>
</feature>
<feature type="modified residue" description="Phosphothreonine" evidence="2">
    <location>
        <position position="12"/>
    </location>
</feature>
<feature type="modified residue" description="N6-acetyllysine" evidence="2">
    <location>
        <position position="59"/>
    </location>
</feature>
<feature type="modified residue" description="N6-acetyllysine" evidence="2">
    <location>
        <position position="82"/>
    </location>
</feature>
<feature type="modified residue" description="S-nitrosocysteine" evidence="2">
    <location>
        <position position="93"/>
    </location>
</feature>
<feature type="modified residue" description="N6-acetyllysine" evidence="2">
    <location>
        <position position="144"/>
    </location>
</feature>
<proteinExistence type="evidence at protein level"/>